<evidence type="ECO:0000255" key="1">
    <source>
        <dbReference type="HAMAP-Rule" id="MF_00476"/>
    </source>
</evidence>
<feature type="chain" id="PRO_1000014078" description="Putative nickel-responsive regulator">
    <location>
        <begin position="1"/>
        <end position="139"/>
    </location>
</feature>
<feature type="binding site" evidence="1">
    <location>
        <position position="79"/>
    </location>
    <ligand>
        <name>Ni(2+)</name>
        <dbReference type="ChEBI" id="CHEBI:49786"/>
    </ligand>
</feature>
<feature type="binding site" evidence="1">
    <location>
        <position position="90"/>
    </location>
    <ligand>
        <name>Ni(2+)</name>
        <dbReference type="ChEBI" id="CHEBI:49786"/>
    </ligand>
</feature>
<feature type="binding site" evidence="1">
    <location>
        <position position="92"/>
    </location>
    <ligand>
        <name>Ni(2+)</name>
        <dbReference type="ChEBI" id="CHEBI:49786"/>
    </ligand>
</feature>
<feature type="binding site" evidence="1">
    <location>
        <position position="98"/>
    </location>
    <ligand>
        <name>Ni(2+)</name>
        <dbReference type="ChEBI" id="CHEBI:49786"/>
    </ligand>
</feature>
<keyword id="KW-0238">DNA-binding</keyword>
<keyword id="KW-0479">Metal-binding</keyword>
<keyword id="KW-0533">Nickel</keyword>
<keyword id="KW-1185">Reference proteome</keyword>
<keyword id="KW-0804">Transcription</keyword>
<keyword id="KW-0805">Transcription regulation</keyword>
<reference key="1">
    <citation type="submission" date="2006-10" db="EMBL/GenBank/DDBJ databases">
        <title>Complete sequence of chromosome of Pelobacter propionicus DSM 2379.</title>
        <authorList>
            <consortium name="US DOE Joint Genome Institute"/>
            <person name="Copeland A."/>
            <person name="Lucas S."/>
            <person name="Lapidus A."/>
            <person name="Barry K."/>
            <person name="Detter J.C."/>
            <person name="Glavina del Rio T."/>
            <person name="Hammon N."/>
            <person name="Israni S."/>
            <person name="Dalin E."/>
            <person name="Tice H."/>
            <person name="Pitluck S."/>
            <person name="Saunders E."/>
            <person name="Brettin T."/>
            <person name="Bruce D."/>
            <person name="Han C."/>
            <person name="Tapia R."/>
            <person name="Schmutz J."/>
            <person name="Larimer F."/>
            <person name="Land M."/>
            <person name="Hauser L."/>
            <person name="Kyrpides N."/>
            <person name="Kim E."/>
            <person name="Lovley D."/>
            <person name="Richardson P."/>
        </authorList>
    </citation>
    <scope>NUCLEOTIDE SEQUENCE [LARGE SCALE GENOMIC DNA]</scope>
    <source>
        <strain>DSM 2379 / NBRC 103807 / OttBd1</strain>
    </source>
</reference>
<name>NIKR_PELPD</name>
<organism>
    <name type="scientific">Pelobacter propionicus (strain DSM 2379 / NBRC 103807 / OttBd1)</name>
    <dbReference type="NCBI Taxonomy" id="338966"/>
    <lineage>
        <taxon>Bacteria</taxon>
        <taxon>Pseudomonadati</taxon>
        <taxon>Thermodesulfobacteriota</taxon>
        <taxon>Desulfuromonadia</taxon>
        <taxon>Desulfuromonadales</taxon>
        <taxon>Desulfuromonadaceae</taxon>
        <taxon>Pelobacter</taxon>
    </lineage>
</organism>
<dbReference type="EMBL" id="CP000482">
    <property type="protein sequence ID" value="ABK99698.1"/>
    <property type="molecule type" value="Genomic_DNA"/>
</dbReference>
<dbReference type="RefSeq" id="WP_011735964.1">
    <property type="nucleotide sequence ID" value="NC_008609.1"/>
</dbReference>
<dbReference type="SMR" id="A1AQS8"/>
<dbReference type="STRING" id="338966.Ppro_2090"/>
<dbReference type="KEGG" id="ppd:Ppro_2090"/>
<dbReference type="eggNOG" id="COG0864">
    <property type="taxonomic scope" value="Bacteria"/>
</dbReference>
<dbReference type="HOGENOM" id="CLU_113319_1_2_7"/>
<dbReference type="OrthoDB" id="9806294at2"/>
<dbReference type="Proteomes" id="UP000006732">
    <property type="component" value="Chromosome"/>
</dbReference>
<dbReference type="GO" id="GO:0003677">
    <property type="term" value="F:DNA binding"/>
    <property type="evidence" value="ECO:0007669"/>
    <property type="project" value="UniProtKB-KW"/>
</dbReference>
<dbReference type="GO" id="GO:0003700">
    <property type="term" value="F:DNA-binding transcription factor activity"/>
    <property type="evidence" value="ECO:0007669"/>
    <property type="project" value="UniProtKB-UniRule"/>
</dbReference>
<dbReference type="GO" id="GO:0016151">
    <property type="term" value="F:nickel cation binding"/>
    <property type="evidence" value="ECO:0007669"/>
    <property type="project" value="UniProtKB-UniRule"/>
</dbReference>
<dbReference type="GO" id="GO:0010045">
    <property type="term" value="P:response to nickel cation"/>
    <property type="evidence" value="ECO:0007669"/>
    <property type="project" value="InterPro"/>
</dbReference>
<dbReference type="CDD" id="cd22231">
    <property type="entry name" value="RHH_NikR_HicB-like"/>
    <property type="match status" value="1"/>
</dbReference>
<dbReference type="Gene3D" id="3.30.70.1150">
    <property type="entry name" value="ACT-like. Chain A, domain 2"/>
    <property type="match status" value="1"/>
</dbReference>
<dbReference type="Gene3D" id="1.10.1220.10">
    <property type="entry name" value="Met repressor-like"/>
    <property type="match status" value="1"/>
</dbReference>
<dbReference type="HAMAP" id="MF_00476">
    <property type="entry name" value="NikR"/>
    <property type="match status" value="1"/>
</dbReference>
<dbReference type="InterPro" id="IPR027271">
    <property type="entry name" value="Acetolactate_synth/TF_NikR_C"/>
</dbReference>
<dbReference type="InterPro" id="IPR045865">
    <property type="entry name" value="ACT-like_dom_sf"/>
</dbReference>
<dbReference type="InterPro" id="IPR013321">
    <property type="entry name" value="Arc_rbn_hlx_hlx"/>
</dbReference>
<dbReference type="InterPro" id="IPR002145">
    <property type="entry name" value="CopG"/>
</dbReference>
<dbReference type="InterPro" id="IPR050192">
    <property type="entry name" value="CopG/NikR_regulator"/>
</dbReference>
<dbReference type="InterPro" id="IPR022988">
    <property type="entry name" value="Ni_resp_reg_NikR"/>
</dbReference>
<dbReference type="InterPro" id="IPR010985">
    <property type="entry name" value="Ribbon_hlx_hlx"/>
</dbReference>
<dbReference type="InterPro" id="IPR014864">
    <property type="entry name" value="TF_NikR_Ni-bd_C"/>
</dbReference>
<dbReference type="NCBIfam" id="NF001884">
    <property type="entry name" value="PRK00630.1"/>
    <property type="match status" value="1"/>
</dbReference>
<dbReference type="NCBIfam" id="NF002169">
    <property type="entry name" value="PRK01002.1"/>
    <property type="match status" value="1"/>
</dbReference>
<dbReference type="NCBIfam" id="NF002815">
    <property type="entry name" value="PRK02967.1"/>
    <property type="match status" value="1"/>
</dbReference>
<dbReference type="NCBIfam" id="NF003381">
    <property type="entry name" value="PRK04460.1"/>
    <property type="match status" value="1"/>
</dbReference>
<dbReference type="PANTHER" id="PTHR34719">
    <property type="entry name" value="NICKEL-RESPONSIVE REGULATOR"/>
    <property type="match status" value="1"/>
</dbReference>
<dbReference type="PANTHER" id="PTHR34719:SF2">
    <property type="entry name" value="NICKEL-RESPONSIVE REGULATOR"/>
    <property type="match status" value="1"/>
</dbReference>
<dbReference type="Pfam" id="PF08753">
    <property type="entry name" value="NikR_C"/>
    <property type="match status" value="1"/>
</dbReference>
<dbReference type="Pfam" id="PF01402">
    <property type="entry name" value="RHH_1"/>
    <property type="match status" value="1"/>
</dbReference>
<dbReference type="SUPFAM" id="SSF55021">
    <property type="entry name" value="ACT-like"/>
    <property type="match status" value="1"/>
</dbReference>
<dbReference type="SUPFAM" id="SSF47598">
    <property type="entry name" value="Ribbon-helix-helix"/>
    <property type="match status" value="1"/>
</dbReference>
<protein>
    <recommendedName>
        <fullName evidence="1">Putative nickel-responsive regulator</fullName>
    </recommendedName>
</protein>
<gene>
    <name type="ordered locus">Ppro_2090</name>
</gene>
<sequence>MGETIRFGISIDDKLLESFDQLIEHKGYANRSEALRDLIRASLIDVKWENGEEEMVGTVTLVFNHHVRDLSDKLTEHQHAYHHQIISALHVHLDAHNCLEVLVVRGKAREIKKIADELIGVKGVKHGKLVMTATGHDLH</sequence>
<proteinExistence type="inferred from homology"/>
<comment type="function">
    <text evidence="1">Transcriptional regulator.</text>
</comment>
<comment type="cofactor">
    <cofactor evidence="1">
        <name>Ni(2+)</name>
        <dbReference type="ChEBI" id="CHEBI:49786"/>
    </cofactor>
    <text evidence="1">Binds 1 nickel ion per subunit.</text>
</comment>
<comment type="similarity">
    <text evidence="1">Belongs to the transcriptional regulatory CopG/NikR family.</text>
</comment>
<accession>A1AQS8</accession>